<comment type="function">
    <text evidence="1">Necessary for normal cell division and for the maintenance of normal septation.</text>
</comment>
<comment type="function">
    <text>Binds GTP and GDP.</text>
</comment>
<comment type="cofactor">
    <cofactor evidence="1">
        <name>Mg(2+)</name>
        <dbReference type="ChEBI" id="CHEBI:18420"/>
    </cofactor>
</comment>
<comment type="interaction">
    <interactant intactId="EBI-6401087">
        <id>P38424</id>
    </interactant>
    <interactant intactId="EBI-6401093">
        <id>Q06797</id>
        <label>rplA</label>
    </interactant>
    <organismsDiffer>false</organismsDiffer>
    <experiments>3</experiments>
</comment>
<comment type="interaction">
    <interactant intactId="EBI-6401087">
        <id>P38424</id>
    </interactant>
    <interactant intactId="EBI-6401129">
        <id>P46898</id>
        <label>rplF</label>
    </interactant>
    <organismsDiffer>false</organismsDiffer>
    <experiments>2</experiments>
</comment>
<comment type="interaction">
    <interactant intactId="EBI-6401087">
        <id>P38424</id>
    </interactant>
    <interactant intactId="EBI-6401150">
        <id>P02394</id>
        <label>rplL</label>
    </interactant>
    <organismsDiffer>false</organismsDiffer>
    <experiments>2</experiments>
</comment>
<comment type="disruption phenotype">
    <text evidence="2">Essential for growth, it cannot be disrupted. In depletion experiments cells become over 3-fold longer, are abnormally curved and nucleoids condense.</text>
</comment>
<comment type="miscellaneous">
    <text>Estimated to be present at 1000 copies per cell.</text>
</comment>
<comment type="similarity">
    <text evidence="1">Belongs to the TRAFAC class TrmE-Era-EngA-EngB-Septin-like GTPase superfamily. EngB GTPase family.</text>
</comment>
<organism>
    <name type="scientific">Bacillus subtilis (strain 168)</name>
    <dbReference type="NCBI Taxonomy" id="224308"/>
    <lineage>
        <taxon>Bacteria</taxon>
        <taxon>Bacillati</taxon>
        <taxon>Bacillota</taxon>
        <taxon>Bacilli</taxon>
        <taxon>Bacillales</taxon>
        <taxon>Bacillaceae</taxon>
        <taxon>Bacillus</taxon>
    </lineage>
</organism>
<protein>
    <recommendedName>
        <fullName evidence="1">Probable GTP-binding protein EngB</fullName>
    </recommendedName>
</protein>
<gene>
    <name evidence="1" type="primary">engB</name>
    <name type="synonym">ysxC</name>
    <name type="ordered locus">BSU28190</name>
</gene>
<reference key="1">
    <citation type="journal article" date="1994" name="J. Bacteriol.">
        <title>Cloning, nucleotide sequence, and expression of the Bacillus subtilis lon gene.</title>
        <authorList>
            <person name="Riethdorf S."/>
            <person name="Voelker U."/>
            <person name="Gerth U."/>
            <person name="Winkler A."/>
            <person name="Engelmann S."/>
            <person name="Hecker M."/>
        </authorList>
    </citation>
    <scope>NUCLEOTIDE SEQUENCE [GENOMIC DNA]</scope>
    <source>
        <strain>168 / IS58</strain>
    </source>
</reference>
<reference key="2">
    <citation type="journal article" date="1996" name="Microbiology">
        <title>The dnaB-pheA (256 degrees-240 degrees) region of the Bacillus subtilis chromosome containing genes responsible for stress responses, the utilization of plant cell walls and primary metabolism.</title>
        <authorList>
            <person name="Wipat A."/>
            <person name="Carter N."/>
            <person name="Brignell C.S."/>
            <person name="Guy J.B."/>
            <person name="Piper K."/>
            <person name="Sanders J."/>
            <person name="Emmerson P.T."/>
            <person name="Harwood C.R."/>
        </authorList>
    </citation>
    <scope>NUCLEOTIDE SEQUENCE [GENOMIC DNA]</scope>
    <source>
        <strain>168</strain>
    </source>
</reference>
<reference key="3">
    <citation type="journal article" date="1997" name="Nature">
        <title>The complete genome sequence of the Gram-positive bacterium Bacillus subtilis.</title>
        <authorList>
            <person name="Kunst F."/>
            <person name="Ogasawara N."/>
            <person name="Moszer I."/>
            <person name="Albertini A.M."/>
            <person name="Alloni G."/>
            <person name="Azevedo V."/>
            <person name="Bertero M.G."/>
            <person name="Bessieres P."/>
            <person name="Bolotin A."/>
            <person name="Borchert S."/>
            <person name="Borriss R."/>
            <person name="Boursier L."/>
            <person name="Brans A."/>
            <person name="Braun M."/>
            <person name="Brignell S.C."/>
            <person name="Bron S."/>
            <person name="Brouillet S."/>
            <person name="Bruschi C.V."/>
            <person name="Caldwell B."/>
            <person name="Capuano V."/>
            <person name="Carter N.M."/>
            <person name="Choi S.-K."/>
            <person name="Codani J.-J."/>
            <person name="Connerton I.F."/>
            <person name="Cummings N.J."/>
            <person name="Daniel R.A."/>
            <person name="Denizot F."/>
            <person name="Devine K.M."/>
            <person name="Duesterhoeft A."/>
            <person name="Ehrlich S.D."/>
            <person name="Emmerson P.T."/>
            <person name="Entian K.-D."/>
            <person name="Errington J."/>
            <person name="Fabret C."/>
            <person name="Ferrari E."/>
            <person name="Foulger D."/>
            <person name="Fritz C."/>
            <person name="Fujita M."/>
            <person name="Fujita Y."/>
            <person name="Fuma S."/>
            <person name="Galizzi A."/>
            <person name="Galleron N."/>
            <person name="Ghim S.-Y."/>
            <person name="Glaser P."/>
            <person name="Goffeau A."/>
            <person name="Golightly E.J."/>
            <person name="Grandi G."/>
            <person name="Guiseppi G."/>
            <person name="Guy B.J."/>
            <person name="Haga K."/>
            <person name="Haiech J."/>
            <person name="Harwood C.R."/>
            <person name="Henaut A."/>
            <person name="Hilbert H."/>
            <person name="Holsappel S."/>
            <person name="Hosono S."/>
            <person name="Hullo M.-F."/>
            <person name="Itaya M."/>
            <person name="Jones L.-M."/>
            <person name="Joris B."/>
            <person name="Karamata D."/>
            <person name="Kasahara Y."/>
            <person name="Klaerr-Blanchard M."/>
            <person name="Klein C."/>
            <person name="Kobayashi Y."/>
            <person name="Koetter P."/>
            <person name="Koningstein G."/>
            <person name="Krogh S."/>
            <person name="Kumano M."/>
            <person name="Kurita K."/>
            <person name="Lapidus A."/>
            <person name="Lardinois S."/>
            <person name="Lauber J."/>
            <person name="Lazarevic V."/>
            <person name="Lee S.-M."/>
            <person name="Levine A."/>
            <person name="Liu H."/>
            <person name="Masuda S."/>
            <person name="Mauel C."/>
            <person name="Medigue C."/>
            <person name="Medina N."/>
            <person name="Mellado R.P."/>
            <person name="Mizuno M."/>
            <person name="Moestl D."/>
            <person name="Nakai S."/>
            <person name="Noback M."/>
            <person name="Noone D."/>
            <person name="O'Reilly M."/>
            <person name="Ogawa K."/>
            <person name="Ogiwara A."/>
            <person name="Oudega B."/>
            <person name="Park S.-H."/>
            <person name="Parro V."/>
            <person name="Pohl T.M."/>
            <person name="Portetelle D."/>
            <person name="Porwollik S."/>
            <person name="Prescott A.M."/>
            <person name="Presecan E."/>
            <person name="Pujic P."/>
            <person name="Purnelle B."/>
            <person name="Rapoport G."/>
            <person name="Rey M."/>
            <person name="Reynolds S."/>
            <person name="Rieger M."/>
            <person name="Rivolta C."/>
            <person name="Rocha E."/>
            <person name="Roche B."/>
            <person name="Rose M."/>
            <person name="Sadaie Y."/>
            <person name="Sato T."/>
            <person name="Scanlan E."/>
            <person name="Schleich S."/>
            <person name="Schroeter R."/>
            <person name="Scoffone F."/>
            <person name="Sekiguchi J."/>
            <person name="Sekowska A."/>
            <person name="Seror S.J."/>
            <person name="Serror P."/>
            <person name="Shin B.-S."/>
            <person name="Soldo B."/>
            <person name="Sorokin A."/>
            <person name="Tacconi E."/>
            <person name="Takagi T."/>
            <person name="Takahashi H."/>
            <person name="Takemaru K."/>
            <person name="Takeuchi M."/>
            <person name="Tamakoshi A."/>
            <person name="Tanaka T."/>
            <person name="Terpstra P."/>
            <person name="Tognoni A."/>
            <person name="Tosato V."/>
            <person name="Uchiyama S."/>
            <person name="Vandenbol M."/>
            <person name="Vannier F."/>
            <person name="Vassarotti A."/>
            <person name="Viari A."/>
            <person name="Wambutt R."/>
            <person name="Wedler E."/>
            <person name="Wedler H."/>
            <person name="Weitzenegger T."/>
            <person name="Winters P."/>
            <person name="Wipat A."/>
            <person name="Yamamoto H."/>
            <person name="Yamane K."/>
            <person name="Yasumoto K."/>
            <person name="Yata K."/>
            <person name="Yoshida K."/>
            <person name="Yoshikawa H.-F."/>
            <person name="Zumstein E."/>
            <person name="Yoshikawa H."/>
            <person name="Danchin A."/>
        </authorList>
    </citation>
    <scope>NUCLEOTIDE SEQUENCE [LARGE SCALE GENOMIC DNA]</scope>
    <source>
        <strain>168</strain>
    </source>
</reference>
<reference key="4">
    <citation type="journal article" date="2002" name="Microbiology">
        <title>Six GTP-binding proteins of the Era/Obg family are essential for cell growth in Bacillus subtilis.</title>
        <authorList>
            <person name="Morimoto T."/>
            <person name="Loh P.C."/>
            <person name="Hirai T."/>
            <person name="Asai K."/>
            <person name="Kobayashi K."/>
            <person name="Moriya S."/>
            <person name="Ogasawara N."/>
        </authorList>
    </citation>
    <scope>GTP- AND GDP-BINDING</scope>
    <scope>PROTEIN LEVELS</scope>
    <scope>DISRUPTION PHENOTYPE</scope>
    <source>
        <strain>CRK6000</strain>
    </source>
</reference>
<dbReference type="EMBL" id="X76424">
    <property type="protein sequence ID" value="CAA53985.1"/>
    <property type="molecule type" value="Genomic_DNA"/>
</dbReference>
<dbReference type="EMBL" id="Z75208">
    <property type="protein sequence ID" value="CAA99541.1"/>
    <property type="molecule type" value="Genomic_DNA"/>
</dbReference>
<dbReference type="EMBL" id="AL009126">
    <property type="protein sequence ID" value="CAB14779.1"/>
    <property type="molecule type" value="Genomic_DNA"/>
</dbReference>
<dbReference type="PIR" id="I40422">
    <property type="entry name" value="I40422"/>
</dbReference>
<dbReference type="RefSeq" id="NP_390697.1">
    <property type="nucleotide sequence ID" value="NC_000964.3"/>
</dbReference>
<dbReference type="PDB" id="1SUL">
    <property type="method" value="X-ray"/>
    <property type="resolution" value="2.00 A"/>
    <property type="chains" value="A/B=1-195"/>
</dbReference>
<dbReference type="PDB" id="1SVI">
    <property type="method" value="X-ray"/>
    <property type="resolution" value="1.95 A"/>
    <property type="chains" value="A=1-195"/>
</dbReference>
<dbReference type="PDB" id="1SVW">
    <property type="method" value="X-ray"/>
    <property type="resolution" value="2.80 A"/>
    <property type="chains" value="A/B=1-195"/>
</dbReference>
<dbReference type="PDBsum" id="1SUL"/>
<dbReference type="PDBsum" id="1SVI"/>
<dbReference type="PDBsum" id="1SVW"/>
<dbReference type="SMR" id="P38424"/>
<dbReference type="FunCoup" id="P38424">
    <property type="interactions" value="380"/>
</dbReference>
<dbReference type="IntAct" id="P38424">
    <property type="interactions" value="7"/>
</dbReference>
<dbReference type="STRING" id="224308.BSU28190"/>
<dbReference type="DrugBank" id="DB04315">
    <property type="generic name" value="Guanosine-5'-Diphosphate"/>
</dbReference>
<dbReference type="DrugBank" id="DB04137">
    <property type="generic name" value="Guanosine-5'-Triphosphate"/>
</dbReference>
<dbReference type="PaxDb" id="224308-BSU28190"/>
<dbReference type="EnsemblBacteria" id="CAB14779">
    <property type="protein sequence ID" value="CAB14779"/>
    <property type="gene ID" value="BSU_28190"/>
</dbReference>
<dbReference type="GeneID" id="938009"/>
<dbReference type="KEGG" id="bsu:BSU28190"/>
<dbReference type="PATRIC" id="fig|224308.179.peg.3062"/>
<dbReference type="eggNOG" id="COG0218">
    <property type="taxonomic scope" value="Bacteria"/>
</dbReference>
<dbReference type="InParanoid" id="P38424"/>
<dbReference type="OrthoDB" id="9804921at2"/>
<dbReference type="PhylomeDB" id="P38424"/>
<dbReference type="BioCyc" id="BSUB:BSU28190-MONOMER"/>
<dbReference type="EvolutionaryTrace" id="P38424"/>
<dbReference type="Proteomes" id="UP000001570">
    <property type="component" value="Chromosome"/>
</dbReference>
<dbReference type="GO" id="GO:0005829">
    <property type="term" value="C:cytosol"/>
    <property type="evidence" value="ECO:0000318"/>
    <property type="project" value="GO_Central"/>
</dbReference>
<dbReference type="GO" id="GO:0005525">
    <property type="term" value="F:GTP binding"/>
    <property type="evidence" value="ECO:0007669"/>
    <property type="project" value="UniProtKB-UniRule"/>
</dbReference>
<dbReference type="GO" id="GO:0046872">
    <property type="term" value="F:metal ion binding"/>
    <property type="evidence" value="ECO:0007669"/>
    <property type="project" value="UniProtKB-KW"/>
</dbReference>
<dbReference type="GO" id="GO:0000917">
    <property type="term" value="P:division septum assembly"/>
    <property type="evidence" value="ECO:0007669"/>
    <property type="project" value="UniProtKB-KW"/>
</dbReference>
<dbReference type="CDD" id="cd01876">
    <property type="entry name" value="YihA_EngB"/>
    <property type="match status" value="1"/>
</dbReference>
<dbReference type="FunFam" id="3.40.50.300:FF:000098">
    <property type="entry name" value="Probable GTP-binding protein EngB"/>
    <property type="match status" value="1"/>
</dbReference>
<dbReference type="Gene3D" id="3.40.50.300">
    <property type="entry name" value="P-loop containing nucleotide triphosphate hydrolases"/>
    <property type="match status" value="1"/>
</dbReference>
<dbReference type="HAMAP" id="MF_00321">
    <property type="entry name" value="GTPase_EngB"/>
    <property type="match status" value="1"/>
</dbReference>
<dbReference type="InterPro" id="IPR030393">
    <property type="entry name" value="G_ENGB_dom"/>
</dbReference>
<dbReference type="InterPro" id="IPR006073">
    <property type="entry name" value="GTP-bd"/>
</dbReference>
<dbReference type="InterPro" id="IPR019987">
    <property type="entry name" value="GTP-bd_ribosome_bio_YsxC"/>
</dbReference>
<dbReference type="InterPro" id="IPR027417">
    <property type="entry name" value="P-loop_NTPase"/>
</dbReference>
<dbReference type="InterPro" id="IPR005225">
    <property type="entry name" value="Small_GTP-bd"/>
</dbReference>
<dbReference type="NCBIfam" id="TIGR03598">
    <property type="entry name" value="GTPase_YsxC"/>
    <property type="match status" value="1"/>
</dbReference>
<dbReference type="NCBIfam" id="TIGR00231">
    <property type="entry name" value="small_GTP"/>
    <property type="match status" value="1"/>
</dbReference>
<dbReference type="PANTHER" id="PTHR11649:SF13">
    <property type="entry name" value="ENGB-TYPE G DOMAIN-CONTAINING PROTEIN"/>
    <property type="match status" value="1"/>
</dbReference>
<dbReference type="PANTHER" id="PTHR11649">
    <property type="entry name" value="MSS1/TRME-RELATED GTP-BINDING PROTEIN"/>
    <property type="match status" value="1"/>
</dbReference>
<dbReference type="Pfam" id="PF01926">
    <property type="entry name" value="MMR_HSR1"/>
    <property type="match status" value="1"/>
</dbReference>
<dbReference type="SUPFAM" id="SSF52540">
    <property type="entry name" value="P-loop containing nucleoside triphosphate hydrolases"/>
    <property type="match status" value="1"/>
</dbReference>
<dbReference type="PROSITE" id="PS51706">
    <property type="entry name" value="G_ENGB"/>
    <property type="match status" value="1"/>
</dbReference>
<evidence type="ECO:0000255" key="1">
    <source>
        <dbReference type="HAMAP-Rule" id="MF_00321"/>
    </source>
</evidence>
<evidence type="ECO:0000269" key="2">
    <source>
    </source>
</evidence>
<evidence type="ECO:0007829" key="3">
    <source>
        <dbReference type="PDB" id="1SVI"/>
    </source>
</evidence>
<evidence type="ECO:0007829" key="4">
    <source>
        <dbReference type="PDB" id="1SVW"/>
    </source>
</evidence>
<sequence length="195" mass="22026">MKVTKSEIVISAVKPEQYPEGGLPEIALAGRSNVGKSSFINSLINRKNLARTSSKPGKTQTLNFYIINDELHFVDVPGYGFAKVSKSEREAWGRMIETYITTREELKAVVQIVDLRHAPSNDDVQMYEFLKYYGIPVIVIATKADKIPKGKWDKHAKVVRQTLNIDPEDELILFSSETKKGKDEAWGAIKKMINR</sequence>
<accession>P38424</accession>
<name>ENGB_BACSU</name>
<proteinExistence type="evidence at protein level"/>
<feature type="chain" id="PRO_0000157736" description="Probable GTP-binding protein EngB">
    <location>
        <begin position="1"/>
        <end position="195"/>
    </location>
</feature>
<feature type="domain" description="EngB-type G" evidence="1">
    <location>
        <begin position="22"/>
        <end position="195"/>
    </location>
</feature>
<feature type="binding site" evidence="1">
    <location>
        <begin position="30"/>
        <end position="37"/>
    </location>
    <ligand>
        <name>GTP</name>
        <dbReference type="ChEBI" id="CHEBI:37565"/>
    </ligand>
</feature>
<feature type="binding site" evidence="1">
    <location>
        <position position="37"/>
    </location>
    <ligand>
        <name>Mg(2+)</name>
        <dbReference type="ChEBI" id="CHEBI:18420"/>
    </ligand>
</feature>
<feature type="binding site" evidence="1">
    <location>
        <begin position="57"/>
        <end position="61"/>
    </location>
    <ligand>
        <name>GTP</name>
        <dbReference type="ChEBI" id="CHEBI:37565"/>
    </ligand>
</feature>
<feature type="binding site" evidence="1">
    <location>
        <position position="59"/>
    </location>
    <ligand>
        <name>Mg(2+)</name>
        <dbReference type="ChEBI" id="CHEBI:18420"/>
    </ligand>
</feature>
<feature type="binding site" evidence="1">
    <location>
        <begin position="75"/>
        <end position="78"/>
    </location>
    <ligand>
        <name>GTP</name>
        <dbReference type="ChEBI" id="CHEBI:37565"/>
    </ligand>
</feature>
<feature type="binding site" evidence="1">
    <location>
        <begin position="142"/>
        <end position="145"/>
    </location>
    <ligand>
        <name>GTP</name>
        <dbReference type="ChEBI" id="CHEBI:37565"/>
    </ligand>
</feature>
<feature type="binding site" evidence="1">
    <location>
        <begin position="174"/>
        <end position="176"/>
    </location>
    <ligand>
        <name>GTP</name>
        <dbReference type="ChEBI" id="CHEBI:37565"/>
    </ligand>
</feature>
<feature type="strand" evidence="3">
    <location>
        <begin position="6"/>
        <end position="14"/>
    </location>
</feature>
<feature type="helix" evidence="3">
    <location>
        <begin position="15"/>
        <end position="17"/>
    </location>
</feature>
<feature type="strand" evidence="3">
    <location>
        <begin position="25"/>
        <end position="31"/>
    </location>
</feature>
<feature type="helix" evidence="3">
    <location>
        <begin position="36"/>
        <end position="44"/>
    </location>
</feature>
<feature type="strand" evidence="4">
    <location>
        <begin position="47"/>
        <end position="50"/>
    </location>
</feature>
<feature type="strand" evidence="4">
    <location>
        <begin position="54"/>
        <end position="56"/>
    </location>
</feature>
<feature type="strand" evidence="3">
    <location>
        <begin position="62"/>
        <end position="67"/>
    </location>
</feature>
<feature type="turn" evidence="3">
    <location>
        <begin position="68"/>
        <end position="70"/>
    </location>
</feature>
<feature type="strand" evidence="3">
    <location>
        <begin position="71"/>
        <end position="75"/>
    </location>
</feature>
<feature type="strand" evidence="4">
    <location>
        <begin position="79"/>
        <end position="81"/>
    </location>
</feature>
<feature type="helix" evidence="3">
    <location>
        <begin position="86"/>
        <end position="102"/>
    </location>
</feature>
<feature type="strand" evidence="3">
    <location>
        <begin position="106"/>
        <end position="114"/>
    </location>
</feature>
<feature type="helix" evidence="3">
    <location>
        <begin position="121"/>
        <end position="132"/>
    </location>
</feature>
<feature type="strand" evidence="3">
    <location>
        <begin position="137"/>
        <end position="142"/>
    </location>
</feature>
<feature type="helix" evidence="3">
    <location>
        <begin position="144"/>
        <end position="146"/>
    </location>
</feature>
<feature type="helix" evidence="3">
    <location>
        <begin position="149"/>
        <end position="151"/>
    </location>
</feature>
<feature type="helix" evidence="3">
    <location>
        <begin position="152"/>
        <end position="163"/>
    </location>
</feature>
<feature type="strand" evidence="3">
    <location>
        <begin position="169"/>
        <end position="173"/>
    </location>
</feature>
<feature type="turn" evidence="3">
    <location>
        <begin position="176"/>
        <end position="178"/>
    </location>
</feature>
<feature type="helix" evidence="3">
    <location>
        <begin position="182"/>
        <end position="193"/>
    </location>
</feature>
<keyword id="KW-0002">3D-structure</keyword>
<keyword id="KW-0131">Cell cycle</keyword>
<keyword id="KW-0132">Cell division</keyword>
<keyword id="KW-0342">GTP-binding</keyword>
<keyword id="KW-0460">Magnesium</keyword>
<keyword id="KW-0479">Metal-binding</keyword>
<keyword id="KW-0547">Nucleotide-binding</keyword>
<keyword id="KW-1185">Reference proteome</keyword>
<keyword id="KW-0717">Septation</keyword>